<evidence type="ECO:0000255" key="1">
    <source>
        <dbReference type="HAMAP-Rule" id="MF_01852"/>
    </source>
</evidence>
<dbReference type="EC" id="2.7.7.87" evidence="1"/>
<dbReference type="EMBL" id="CP002005">
    <property type="protein sequence ID" value="ADG62148.1"/>
    <property type="molecule type" value="Genomic_DNA"/>
</dbReference>
<dbReference type="RefSeq" id="WP_013108276.1">
    <property type="nucleotide sequence ID" value="NC_014147.1"/>
</dbReference>
<dbReference type="SMR" id="D5V9A9"/>
<dbReference type="STRING" id="1236608.MCR_1892"/>
<dbReference type="KEGG" id="mct:MCR_1892"/>
<dbReference type="PATRIC" id="fig|1236608.7.peg.1921"/>
<dbReference type="HOGENOM" id="CLU_031397_6_0_6"/>
<dbReference type="GO" id="GO:0005737">
    <property type="term" value="C:cytoplasm"/>
    <property type="evidence" value="ECO:0007669"/>
    <property type="project" value="UniProtKB-SubCell"/>
</dbReference>
<dbReference type="GO" id="GO:0005524">
    <property type="term" value="F:ATP binding"/>
    <property type="evidence" value="ECO:0007669"/>
    <property type="project" value="UniProtKB-UniRule"/>
</dbReference>
<dbReference type="GO" id="GO:0003725">
    <property type="term" value="F:double-stranded RNA binding"/>
    <property type="evidence" value="ECO:0007669"/>
    <property type="project" value="InterPro"/>
</dbReference>
<dbReference type="GO" id="GO:0061710">
    <property type="term" value="F:L-threonylcarbamoyladenylate synthase"/>
    <property type="evidence" value="ECO:0007669"/>
    <property type="project" value="UniProtKB-EC"/>
</dbReference>
<dbReference type="GO" id="GO:0000049">
    <property type="term" value="F:tRNA binding"/>
    <property type="evidence" value="ECO:0007669"/>
    <property type="project" value="TreeGrafter"/>
</dbReference>
<dbReference type="GO" id="GO:0006450">
    <property type="term" value="P:regulation of translational fidelity"/>
    <property type="evidence" value="ECO:0007669"/>
    <property type="project" value="TreeGrafter"/>
</dbReference>
<dbReference type="GO" id="GO:0002949">
    <property type="term" value="P:tRNA threonylcarbamoyladenosine modification"/>
    <property type="evidence" value="ECO:0007669"/>
    <property type="project" value="UniProtKB-UniRule"/>
</dbReference>
<dbReference type="Gene3D" id="3.90.870.10">
    <property type="entry name" value="DHBP synthase"/>
    <property type="match status" value="1"/>
</dbReference>
<dbReference type="HAMAP" id="MF_01852">
    <property type="entry name" value="TsaC"/>
    <property type="match status" value="1"/>
</dbReference>
<dbReference type="InterPro" id="IPR017945">
    <property type="entry name" value="DHBP_synth_RibB-like_a/b_dom"/>
</dbReference>
<dbReference type="InterPro" id="IPR006070">
    <property type="entry name" value="Sua5-like_dom"/>
</dbReference>
<dbReference type="InterPro" id="IPR023535">
    <property type="entry name" value="TC-AMP_synthase"/>
</dbReference>
<dbReference type="InterPro" id="IPR050156">
    <property type="entry name" value="TC-AMP_synthase_SUA5"/>
</dbReference>
<dbReference type="PANTHER" id="PTHR17490">
    <property type="entry name" value="SUA5"/>
    <property type="match status" value="1"/>
</dbReference>
<dbReference type="PANTHER" id="PTHR17490:SF18">
    <property type="entry name" value="THREONYLCARBAMOYL-AMP SYNTHASE"/>
    <property type="match status" value="1"/>
</dbReference>
<dbReference type="Pfam" id="PF01300">
    <property type="entry name" value="Sua5_yciO_yrdC"/>
    <property type="match status" value="1"/>
</dbReference>
<dbReference type="SUPFAM" id="SSF55821">
    <property type="entry name" value="YrdC/RibB"/>
    <property type="match status" value="1"/>
</dbReference>
<dbReference type="PROSITE" id="PS51163">
    <property type="entry name" value="YRDC"/>
    <property type="match status" value="1"/>
</dbReference>
<keyword id="KW-0067">ATP-binding</keyword>
<keyword id="KW-0963">Cytoplasm</keyword>
<keyword id="KW-0547">Nucleotide-binding</keyword>
<keyword id="KW-0548">Nucleotidyltransferase</keyword>
<keyword id="KW-0808">Transferase</keyword>
<keyword id="KW-0819">tRNA processing</keyword>
<reference key="1">
    <citation type="journal article" date="2010" name="J. Bacteriol.">
        <title>Genome analysis of Moraxella catarrhalis strain RH4, a human respiratory tract pathogen.</title>
        <authorList>
            <person name="de Vries S.P."/>
            <person name="van Hijum S.A."/>
            <person name="Schueler W."/>
            <person name="Riesbeck K."/>
            <person name="Hays J.P."/>
            <person name="Hermans P.W."/>
            <person name="Bootsma H.J."/>
        </authorList>
    </citation>
    <scope>NUCLEOTIDE SEQUENCE [LARGE SCALE GENOMIC DNA]</scope>
    <source>
        <strain>BBH18</strain>
    </source>
</reference>
<gene>
    <name evidence="1" type="primary">tsaC</name>
    <name type="synonym">rimN</name>
    <name type="ordered locus">MCR_1892</name>
</gene>
<sequence length="204" mass="22159">MAGSKQIFGADELDLVANYLQAGGVLAYPSESVWGLGCDAFNTDAINQIINLKHRDIGKGLIVLTDAAERLKSLIDVSHETSLLDYMQNFSDEFTHKHSRALTWLMPIQSSVLPSVLIGSHDTLAVRITTHPLLKDLCHALISPTNPYGFLVSTSCNLSKSTPAKNLTQAMGYFGDQIAYLDTDGLGFAQPSCIKDLLAGHILR</sequence>
<name>TSAC_MORCB</name>
<accession>D5V9A9</accession>
<comment type="function">
    <text evidence="1">Required for the formation of a threonylcarbamoyl group on adenosine at position 37 (t(6)A37) in tRNAs that read codons beginning with adenine. Catalyzes the conversion of L-threonine, HCO(3)(-)/CO(2) and ATP to give threonylcarbamoyl-AMP (TC-AMP) as the acyladenylate intermediate, with the release of diphosphate.</text>
</comment>
<comment type="catalytic activity">
    <reaction evidence="1">
        <text>L-threonine + hydrogencarbonate + ATP = L-threonylcarbamoyladenylate + diphosphate + H2O</text>
        <dbReference type="Rhea" id="RHEA:36407"/>
        <dbReference type="ChEBI" id="CHEBI:15377"/>
        <dbReference type="ChEBI" id="CHEBI:17544"/>
        <dbReference type="ChEBI" id="CHEBI:30616"/>
        <dbReference type="ChEBI" id="CHEBI:33019"/>
        <dbReference type="ChEBI" id="CHEBI:57926"/>
        <dbReference type="ChEBI" id="CHEBI:73682"/>
        <dbReference type="EC" id="2.7.7.87"/>
    </reaction>
</comment>
<comment type="subcellular location">
    <subcellularLocation>
        <location evidence="1">Cytoplasm</location>
    </subcellularLocation>
</comment>
<comment type="similarity">
    <text evidence="1">Belongs to the SUA5 family. TsaC subfamily.</text>
</comment>
<protein>
    <recommendedName>
        <fullName evidence="1">Threonylcarbamoyl-AMP synthase</fullName>
        <shortName evidence="1">TC-AMP synthase</shortName>
        <ecNumber evidence="1">2.7.7.87</ecNumber>
    </recommendedName>
    <alternativeName>
        <fullName evidence="1">L-threonylcarbamoyladenylate synthase</fullName>
    </alternativeName>
    <alternativeName>
        <fullName evidence="1">t(6)A37 threonylcarbamoyladenosine biosynthesis protein TsaC</fullName>
    </alternativeName>
    <alternativeName>
        <fullName evidence="1">tRNA threonylcarbamoyladenosine biosynthesis protein TsaC</fullName>
    </alternativeName>
</protein>
<feature type="chain" id="PRO_0000403979" description="Threonylcarbamoyl-AMP synthase">
    <location>
        <begin position="1"/>
        <end position="204"/>
    </location>
</feature>
<feature type="domain" description="YrdC-like" evidence="1">
    <location>
        <begin position="10"/>
        <end position="204"/>
    </location>
</feature>
<organism>
    <name type="scientific">Moraxella catarrhalis (strain BBH18)</name>
    <dbReference type="NCBI Taxonomy" id="1236608"/>
    <lineage>
        <taxon>Bacteria</taxon>
        <taxon>Pseudomonadati</taxon>
        <taxon>Pseudomonadota</taxon>
        <taxon>Gammaproteobacteria</taxon>
        <taxon>Moraxellales</taxon>
        <taxon>Moraxellaceae</taxon>
        <taxon>Moraxella</taxon>
    </lineage>
</organism>
<proteinExistence type="inferred from homology"/>